<name>Y941_STAA8</name>
<accession>Q2G200</accession>
<feature type="chain" id="PRO_0000369667" description="UPF0738 protein SAOUHSC_00941">
    <location>
        <begin position="1"/>
        <end position="115"/>
    </location>
</feature>
<comment type="similarity">
    <text evidence="1">Belongs to the UPF0738 family.</text>
</comment>
<evidence type="ECO:0000255" key="1">
    <source>
        <dbReference type="HAMAP-Rule" id="MF_01861"/>
    </source>
</evidence>
<organism>
    <name type="scientific">Staphylococcus aureus (strain NCTC 8325 / PS 47)</name>
    <dbReference type="NCBI Taxonomy" id="93061"/>
    <lineage>
        <taxon>Bacteria</taxon>
        <taxon>Bacillati</taxon>
        <taxon>Bacillota</taxon>
        <taxon>Bacilli</taxon>
        <taxon>Bacillales</taxon>
        <taxon>Staphylococcaceae</taxon>
        <taxon>Staphylococcus</taxon>
    </lineage>
</organism>
<keyword id="KW-1185">Reference proteome</keyword>
<sequence>MRLYINEIKIKDDILYCYTEDSIKGLSEVGQMLVDSDNYAFAYTLDDGKAYAYLIFVQETWTMLHENMTKKIIINDELELTEFHQELTYILDNIKGNNNYGKEFVATVEETFDIE</sequence>
<protein>
    <recommendedName>
        <fullName evidence="1">UPF0738 protein SAOUHSC_00941</fullName>
    </recommendedName>
</protein>
<proteinExistence type="inferred from homology"/>
<reference key="1">
    <citation type="book" date="2006" name="Gram positive pathogens, 2nd edition">
        <title>The Staphylococcus aureus NCTC 8325 genome.</title>
        <editorList>
            <person name="Fischetti V."/>
            <person name="Novick R."/>
            <person name="Ferretti J."/>
            <person name="Portnoy D."/>
            <person name="Rood J."/>
        </editorList>
        <authorList>
            <person name="Gillaspy A.F."/>
            <person name="Worrell V."/>
            <person name="Orvis J."/>
            <person name="Roe B.A."/>
            <person name="Dyer D.W."/>
            <person name="Iandolo J.J."/>
        </authorList>
    </citation>
    <scope>NUCLEOTIDE SEQUENCE [LARGE SCALE GENOMIC DNA]</scope>
    <source>
        <strain>NCTC 8325 / PS 47</strain>
    </source>
</reference>
<dbReference type="EMBL" id="CP000253">
    <property type="protein sequence ID" value="ABD30066.1"/>
    <property type="molecule type" value="Genomic_DNA"/>
</dbReference>
<dbReference type="RefSeq" id="WP_001242102.1">
    <property type="nucleotide sequence ID" value="NZ_LS483365.1"/>
</dbReference>
<dbReference type="RefSeq" id="YP_499494.1">
    <property type="nucleotide sequence ID" value="NC_007795.1"/>
</dbReference>
<dbReference type="STRING" id="93061.SAOUHSC_00941"/>
<dbReference type="PaxDb" id="1280-SAXN108_1001"/>
<dbReference type="GeneID" id="3920770"/>
<dbReference type="KEGG" id="sao:SAOUHSC_00941"/>
<dbReference type="PATRIC" id="fig|93061.5.peg.862"/>
<dbReference type="eggNOG" id="ENOG5032YMN">
    <property type="taxonomic scope" value="Bacteria"/>
</dbReference>
<dbReference type="HOGENOM" id="CLU_142282_0_0_9"/>
<dbReference type="OrthoDB" id="2966478at2"/>
<dbReference type="PRO" id="PR:Q2G200"/>
<dbReference type="Proteomes" id="UP000008816">
    <property type="component" value="Chromosome"/>
</dbReference>
<dbReference type="HAMAP" id="MF_01861">
    <property type="entry name" value="UPF0738"/>
    <property type="match status" value="1"/>
</dbReference>
<dbReference type="InterPro" id="IPR020908">
    <property type="entry name" value="UPF0738"/>
</dbReference>
<dbReference type="Pfam" id="PF19785">
    <property type="entry name" value="UPF0738"/>
    <property type="match status" value="1"/>
</dbReference>
<gene>
    <name type="ordered locus">SAOUHSC_00941</name>
</gene>